<proteinExistence type="inferred from homology"/>
<feature type="chain" id="PRO_0000354518" description="Large ribosomal subunit protein uL22">
    <location>
        <begin position="1"/>
        <end position="112"/>
    </location>
</feature>
<reference key="1">
    <citation type="journal article" date="2007" name="Nat. Biotechnol.">
        <title>Complete genome sequence of the myxobacterium Sorangium cellulosum.</title>
        <authorList>
            <person name="Schneiker S."/>
            <person name="Perlova O."/>
            <person name="Kaiser O."/>
            <person name="Gerth K."/>
            <person name="Alici A."/>
            <person name="Altmeyer M.O."/>
            <person name="Bartels D."/>
            <person name="Bekel T."/>
            <person name="Beyer S."/>
            <person name="Bode E."/>
            <person name="Bode H.B."/>
            <person name="Bolten C.J."/>
            <person name="Choudhuri J.V."/>
            <person name="Doss S."/>
            <person name="Elnakady Y.A."/>
            <person name="Frank B."/>
            <person name="Gaigalat L."/>
            <person name="Goesmann A."/>
            <person name="Groeger C."/>
            <person name="Gross F."/>
            <person name="Jelsbak L."/>
            <person name="Jelsbak L."/>
            <person name="Kalinowski J."/>
            <person name="Kegler C."/>
            <person name="Knauber T."/>
            <person name="Konietzny S."/>
            <person name="Kopp M."/>
            <person name="Krause L."/>
            <person name="Krug D."/>
            <person name="Linke B."/>
            <person name="Mahmud T."/>
            <person name="Martinez-Arias R."/>
            <person name="McHardy A.C."/>
            <person name="Merai M."/>
            <person name="Meyer F."/>
            <person name="Mormann S."/>
            <person name="Munoz-Dorado J."/>
            <person name="Perez J."/>
            <person name="Pradella S."/>
            <person name="Rachid S."/>
            <person name="Raddatz G."/>
            <person name="Rosenau F."/>
            <person name="Rueckert C."/>
            <person name="Sasse F."/>
            <person name="Scharfe M."/>
            <person name="Schuster S.C."/>
            <person name="Suen G."/>
            <person name="Treuner-Lange A."/>
            <person name="Velicer G.J."/>
            <person name="Vorholter F.-J."/>
            <person name="Weissman K.J."/>
            <person name="Welch R.D."/>
            <person name="Wenzel S.C."/>
            <person name="Whitworth D.E."/>
            <person name="Wilhelm S."/>
            <person name="Wittmann C."/>
            <person name="Bloecker H."/>
            <person name="Puehler A."/>
            <person name="Mueller R."/>
        </authorList>
    </citation>
    <scope>NUCLEOTIDE SEQUENCE [LARGE SCALE GENOMIC DNA]</scope>
    <source>
        <strain>So ce56</strain>
    </source>
</reference>
<protein>
    <recommendedName>
        <fullName evidence="1">Large ribosomal subunit protein uL22</fullName>
    </recommendedName>
    <alternativeName>
        <fullName evidence="2">50S ribosomal protein L22</fullName>
    </alternativeName>
</protein>
<gene>
    <name evidence="1" type="primary">rplV</name>
    <name type="ordered locus">sce7958</name>
</gene>
<dbReference type="EMBL" id="AM746676">
    <property type="protein sequence ID" value="CAN98128.1"/>
    <property type="molecule type" value="Genomic_DNA"/>
</dbReference>
<dbReference type="RefSeq" id="WP_012240567.1">
    <property type="nucleotide sequence ID" value="NC_010162.1"/>
</dbReference>
<dbReference type="SMR" id="A9FGK2"/>
<dbReference type="STRING" id="448385.sce7958"/>
<dbReference type="KEGG" id="scl:sce7958"/>
<dbReference type="eggNOG" id="COG0091">
    <property type="taxonomic scope" value="Bacteria"/>
</dbReference>
<dbReference type="HOGENOM" id="CLU_083987_3_3_7"/>
<dbReference type="OrthoDB" id="9805969at2"/>
<dbReference type="BioCyc" id="SCEL448385:SCE_RS40730-MONOMER"/>
<dbReference type="Proteomes" id="UP000002139">
    <property type="component" value="Chromosome"/>
</dbReference>
<dbReference type="GO" id="GO:0022625">
    <property type="term" value="C:cytosolic large ribosomal subunit"/>
    <property type="evidence" value="ECO:0007669"/>
    <property type="project" value="TreeGrafter"/>
</dbReference>
<dbReference type="GO" id="GO:0019843">
    <property type="term" value="F:rRNA binding"/>
    <property type="evidence" value="ECO:0007669"/>
    <property type="project" value="UniProtKB-UniRule"/>
</dbReference>
<dbReference type="GO" id="GO:0003735">
    <property type="term" value="F:structural constituent of ribosome"/>
    <property type="evidence" value="ECO:0007669"/>
    <property type="project" value="InterPro"/>
</dbReference>
<dbReference type="GO" id="GO:0006412">
    <property type="term" value="P:translation"/>
    <property type="evidence" value="ECO:0007669"/>
    <property type="project" value="UniProtKB-UniRule"/>
</dbReference>
<dbReference type="CDD" id="cd00336">
    <property type="entry name" value="Ribosomal_L22"/>
    <property type="match status" value="1"/>
</dbReference>
<dbReference type="Gene3D" id="3.90.470.10">
    <property type="entry name" value="Ribosomal protein L22/L17"/>
    <property type="match status" value="1"/>
</dbReference>
<dbReference type="HAMAP" id="MF_01331_B">
    <property type="entry name" value="Ribosomal_uL22_B"/>
    <property type="match status" value="1"/>
</dbReference>
<dbReference type="InterPro" id="IPR001063">
    <property type="entry name" value="Ribosomal_uL22"/>
</dbReference>
<dbReference type="InterPro" id="IPR005727">
    <property type="entry name" value="Ribosomal_uL22_bac/chlpt-type"/>
</dbReference>
<dbReference type="InterPro" id="IPR047867">
    <property type="entry name" value="Ribosomal_uL22_bac/org-type"/>
</dbReference>
<dbReference type="InterPro" id="IPR018260">
    <property type="entry name" value="Ribosomal_uL22_CS"/>
</dbReference>
<dbReference type="InterPro" id="IPR036394">
    <property type="entry name" value="Ribosomal_uL22_sf"/>
</dbReference>
<dbReference type="NCBIfam" id="TIGR01044">
    <property type="entry name" value="rplV_bact"/>
    <property type="match status" value="1"/>
</dbReference>
<dbReference type="PANTHER" id="PTHR13501">
    <property type="entry name" value="CHLOROPLAST 50S RIBOSOMAL PROTEIN L22-RELATED"/>
    <property type="match status" value="1"/>
</dbReference>
<dbReference type="PANTHER" id="PTHR13501:SF8">
    <property type="entry name" value="LARGE RIBOSOMAL SUBUNIT PROTEIN UL22M"/>
    <property type="match status" value="1"/>
</dbReference>
<dbReference type="Pfam" id="PF00237">
    <property type="entry name" value="Ribosomal_L22"/>
    <property type="match status" value="1"/>
</dbReference>
<dbReference type="SUPFAM" id="SSF54843">
    <property type="entry name" value="Ribosomal protein L22"/>
    <property type="match status" value="1"/>
</dbReference>
<dbReference type="PROSITE" id="PS00464">
    <property type="entry name" value="RIBOSOMAL_L22"/>
    <property type="match status" value="1"/>
</dbReference>
<evidence type="ECO:0000255" key="1">
    <source>
        <dbReference type="HAMAP-Rule" id="MF_01331"/>
    </source>
</evidence>
<evidence type="ECO:0000305" key="2"/>
<organism>
    <name type="scientific">Sorangium cellulosum (strain So ce56)</name>
    <name type="common">Polyangium cellulosum (strain So ce56)</name>
    <dbReference type="NCBI Taxonomy" id="448385"/>
    <lineage>
        <taxon>Bacteria</taxon>
        <taxon>Pseudomonadati</taxon>
        <taxon>Myxococcota</taxon>
        <taxon>Polyangia</taxon>
        <taxon>Polyangiales</taxon>
        <taxon>Polyangiaceae</taxon>
        <taxon>Sorangium</taxon>
    </lineage>
</organism>
<keyword id="KW-1185">Reference proteome</keyword>
<keyword id="KW-0687">Ribonucleoprotein</keyword>
<keyword id="KW-0689">Ribosomal protein</keyword>
<keyword id="KW-0694">RNA-binding</keyword>
<keyword id="KW-0699">rRNA-binding</keyword>
<name>RL22_SORC5</name>
<sequence>MVSKASAMFSRIAPRKARMIADLVRGRDADEAIQLLSFTQKSGAPVLRKIIESAVANAQQAGADIDALFISKATVDKGPNKFNRRWRPRAMGRATRITKGVSHIVIEVDERK</sequence>
<comment type="function">
    <text evidence="1">This protein binds specifically to 23S rRNA; its binding is stimulated by other ribosomal proteins, e.g. L4, L17, and L20. It is important during the early stages of 50S assembly. It makes multiple contacts with different domains of the 23S rRNA in the assembled 50S subunit and ribosome (By similarity).</text>
</comment>
<comment type="function">
    <text evidence="1">The globular domain of the protein is located near the polypeptide exit tunnel on the outside of the subunit, while an extended beta-hairpin is found that lines the wall of the exit tunnel in the center of the 70S ribosome.</text>
</comment>
<comment type="subunit">
    <text evidence="1">Part of the 50S ribosomal subunit.</text>
</comment>
<comment type="similarity">
    <text evidence="1">Belongs to the universal ribosomal protein uL22 family.</text>
</comment>
<accession>A9FGK2</accession>